<evidence type="ECO:0000255" key="1">
    <source>
        <dbReference type="HAMAP-Rule" id="MF_01639"/>
    </source>
</evidence>
<protein>
    <recommendedName>
        <fullName evidence="1">Pyridoxal kinase PdxY</fullName>
        <shortName evidence="1">PL kinase</shortName>
        <ecNumber evidence="1">2.7.1.35</ecNumber>
    </recommendedName>
</protein>
<accession>Q8D4Q2</accession>
<proteinExistence type="inferred from homology"/>
<comment type="function">
    <text evidence="1">Pyridoxal kinase involved in the salvage pathway of pyridoxal 5'-phosphate (PLP). Catalyzes the phosphorylation of pyridoxal to PLP.</text>
</comment>
<comment type="catalytic activity">
    <reaction evidence="1">
        <text>pyridoxal + ATP = pyridoxal 5'-phosphate + ADP + H(+)</text>
        <dbReference type="Rhea" id="RHEA:10224"/>
        <dbReference type="ChEBI" id="CHEBI:15378"/>
        <dbReference type="ChEBI" id="CHEBI:17310"/>
        <dbReference type="ChEBI" id="CHEBI:30616"/>
        <dbReference type="ChEBI" id="CHEBI:456216"/>
        <dbReference type="ChEBI" id="CHEBI:597326"/>
        <dbReference type="EC" id="2.7.1.35"/>
    </reaction>
</comment>
<comment type="cofactor">
    <cofactor evidence="1">
        <name>Mg(2+)</name>
        <dbReference type="ChEBI" id="CHEBI:18420"/>
    </cofactor>
</comment>
<comment type="pathway">
    <text evidence="1">Cofactor metabolism; pyridoxal 5'-phosphate salvage; pyridoxal 5'-phosphate from pyridoxal: step 1/1.</text>
</comment>
<comment type="subunit">
    <text evidence="1">Homodimer.</text>
</comment>
<comment type="similarity">
    <text evidence="1">Belongs to the pyridoxine kinase family. PdxY subfamily.</text>
</comment>
<reference key="1">
    <citation type="submission" date="2002-12" db="EMBL/GenBank/DDBJ databases">
        <title>Complete genome sequence of Vibrio vulnificus CMCP6.</title>
        <authorList>
            <person name="Rhee J.H."/>
            <person name="Kim S.Y."/>
            <person name="Chung S.S."/>
            <person name="Kim J.J."/>
            <person name="Moon Y.H."/>
            <person name="Jeong H."/>
            <person name="Choy H.E."/>
        </authorList>
    </citation>
    <scope>NUCLEOTIDE SEQUENCE [LARGE SCALE GENOMIC DNA]</scope>
    <source>
        <strain>CMCP6</strain>
    </source>
</reference>
<organism>
    <name type="scientific">Vibrio vulnificus (strain CMCP6)</name>
    <dbReference type="NCBI Taxonomy" id="216895"/>
    <lineage>
        <taxon>Bacteria</taxon>
        <taxon>Pseudomonadati</taxon>
        <taxon>Pseudomonadota</taxon>
        <taxon>Gammaproteobacteria</taxon>
        <taxon>Vibrionales</taxon>
        <taxon>Vibrionaceae</taxon>
        <taxon>Vibrio</taxon>
    </lineage>
</organism>
<dbReference type="EC" id="2.7.1.35" evidence="1"/>
<dbReference type="EMBL" id="AE016796">
    <property type="protein sequence ID" value="AAO08134.1"/>
    <property type="molecule type" value="Genomic_DNA"/>
</dbReference>
<dbReference type="RefSeq" id="WP_011082129.1">
    <property type="nucleotide sequence ID" value="NC_004460.2"/>
</dbReference>
<dbReference type="SMR" id="Q8D4Q2"/>
<dbReference type="KEGG" id="vvu:VV2_1237"/>
<dbReference type="HOGENOM" id="CLU_046496_3_0_6"/>
<dbReference type="UniPathway" id="UPA01068">
    <property type="reaction ID" value="UER00298"/>
</dbReference>
<dbReference type="Proteomes" id="UP000002275">
    <property type="component" value="Chromosome 2"/>
</dbReference>
<dbReference type="GO" id="GO:0005829">
    <property type="term" value="C:cytosol"/>
    <property type="evidence" value="ECO:0007669"/>
    <property type="project" value="TreeGrafter"/>
</dbReference>
<dbReference type="GO" id="GO:0005524">
    <property type="term" value="F:ATP binding"/>
    <property type="evidence" value="ECO:0007669"/>
    <property type="project" value="UniProtKB-UniRule"/>
</dbReference>
<dbReference type="GO" id="GO:0000287">
    <property type="term" value="F:magnesium ion binding"/>
    <property type="evidence" value="ECO:0007669"/>
    <property type="project" value="UniProtKB-UniRule"/>
</dbReference>
<dbReference type="GO" id="GO:0008478">
    <property type="term" value="F:pyridoxal kinase activity"/>
    <property type="evidence" value="ECO:0007669"/>
    <property type="project" value="UniProtKB-UniRule"/>
</dbReference>
<dbReference type="GO" id="GO:0009443">
    <property type="term" value="P:pyridoxal 5'-phosphate salvage"/>
    <property type="evidence" value="ECO:0007669"/>
    <property type="project" value="UniProtKB-UniRule"/>
</dbReference>
<dbReference type="CDD" id="cd01173">
    <property type="entry name" value="pyridoxal_pyridoxamine_kinase"/>
    <property type="match status" value="1"/>
</dbReference>
<dbReference type="Gene3D" id="3.40.1190.20">
    <property type="match status" value="1"/>
</dbReference>
<dbReference type="HAMAP" id="MF_01639">
    <property type="entry name" value="PdxY"/>
    <property type="match status" value="1"/>
</dbReference>
<dbReference type="InterPro" id="IPR013749">
    <property type="entry name" value="PM/HMP-P_kinase-1"/>
</dbReference>
<dbReference type="InterPro" id="IPR004625">
    <property type="entry name" value="PyrdxlKinase"/>
</dbReference>
<dbReference type="InterPro" id="IPR023685">
    <property type="entry name" value="Pyridoxal_kinase_PdxY"/>
</dbReference>
<dbReference type="InterPro" id="IPR029056">
    <property type="entry name" value="Ribokinase-like"/>
</dbReference>
<dbReference type="NCBIfam" id="NF004398">
    <property type="entry name" value="PRK05756.1"/>
    <property type="match status" value="1"/>
</dbReference>
<dbReference type="NCBIfam" id="TIGR00687">
    <property type="entry name" value="pyridox_kin"/>
    <property type="match status" value="1"/>
</dbReference>
<dbReference type="PANTHER" id="PTHR10534">
    <property type="entry name" value="PYRIDOXAL KINASE"/>
    <property type="match status" value="1"/>
</dbReference>
<dbReference type="PANTHER" id="PTHR10534:SF2">
    <property type="entry name" value="PYRIDOXAL KINASE"/>
    <property type="match status" value="1"/>
</dbReference>
<dbReference type="Pfam" id="PF08543">
    <property type="entry name" value="Phos_pyr_kin"/>
    <property type="match status" value="1"/>
</dbReference>
<dbReference type="SUPFAM" id="SSF53613">
    <property type="entry name" value="Ribokinase-like"/>
    <property type="match status" value="1"/>
</dbReference>
<sequence length="290" mass="31771">MQGILSIQSHVAYGHAGNSSAVFPMQRMGFEVWPIHTVQFSNHTQYQEGWTGRAFSADDISELVRGLNNIGALEKCQAVLTGYQGSAEQCLAVEETVTKVKQANPDALYVCDPVMGAPDKGCIVAPGIAENLLNRLMPMADVIVPNQFELSQFAEMEIHTLDDAIIACQRALAKGPKVVLVKHLYCLSDESFNMLLATQEGTYLAKRPHFEFAKAPVGAGDLISAIFTAGLLKGWTPKQAFQHCHDACYGVLNATYQAGEWELQTIAAQQEFVEPSKHFPLEEVTLKTVE</sequence>
<gene>
    <name evidence="1" type="primary">pdxY</name>
    <name type="ordered locus">VV2_1237</name>
</gene>
<name>PDXY_VIBVU</name>
<keyword id="KW-0067">ATP-binding</keyword>
<keyword id="KW-0418">Kinase</keyword>
<keyword id="KW-0460">Magnesium</keyword>
<keyword id="KW-0547">Nucleotide-binding</keyword>
<keyword id="KW-0808">Transferase</keyword>
<feature type="chain" id="PRO_0000269836" description="Pyridoxal kinase PdxY">
    <location>
        <begin position="1"/>
        <end position="290"/>
    </location>
</feature>
<feature type="binding site" evidence="1">
    <location>
        <position position="9"/>
    </location>
    <ligand>
        <name>substrate</name>
    </ligand>
</feature>
<feature type="binding site" evidence="1">
    <location>
        <begin position="44"/>
        <end position="45"/>
    </location>
    <ligand>
        <name>substrate</name>
    </ligand>
</feature>
<feature type="binding site" evidence="1">
    <location>
        <position position="112"/>
    </location>
    <ligand>
        <name>ATP</name>
        <dbReference type="ChEBI" id="CHEBI:30616"/>
    </ligand>
</feature>
<feature type="binding site" evidence="1">
    <location>
        <position position="144"/>
    </location>
    <ligand>
        <name>ATP</name>
        <dbReference type="ChEBI" id="CHEBI:30616"/>
    </ligand>
</feature>
<feature type="binding site" evidence="1">
    <location>
        <position position="149"/>
    </location>
    <ligand>
        <name>ATP</name>
        <dbReference type="ChEBI" id="CHEBI:30616"/>
    </ligand>
</feature>
<feature type="binding site" evidence="1">
    <location>
        <position position="182"/>
    </location>
    <ligand>
        <name>ATP</name>
        <dbReference type="ChEBI" id="CHEBI:30616"/>
    </ligand>
</feature>
<feature type="binding site" evidence="1">
    <location>
        <position position="221"/>
    </location>
    <ligand>
        <name>substrate</name>
    </ligand>
</feature>